<name>SYE_CORU7</name>
<organism>
    <name type="scientific">Corynebacterium urealyticum (strain ATCC 43042 / DSM 7109)</name>
    <dbReference type="NCBI Taxonomy" id="504474"/>
    <lineage>
        <taxon>Bacteria</taxon>
        <taxon>Bacillati</taxon>
        <taxon>Actinomycetota</taxon>
        <taxon>Actinomycetes</taxon>
        <taxon>Mycobacteriales</taxon>
        <taxon>Corynebacteriaceae</taxon>
        <taxon>Corynebacterium</taxon>
    </lineage>
</organism>
<proteinExistence type="inferred from homology"/>
<keyword id="KW-0030">Aminoacyl-tRNA synthetase</keyword>
<keyword id="KW-0067">ATP-binding</keyword>
<keyword id="KW-0963">Cytoplasm</keyword>
<keyword id="KW-0436">Ligase</keyword>
<keyword id="KW-0547">Nucleotide-binding</keyword>
<keyword id="KW-0648">Protein biosynthesis</keyword>
<keyword id="KW-1185">Reference proteome</keyword>
<reference key="1">
    <citation type="journal article" date="2008" name="J. Biotechnol.">
        <title>The lifestyle of Corynebacterium urealyticum derived from its complete genome sequence established by pyrosequencing.</title>
        <authorList>
            <person name="Tauch A."/>
            <person name="Trost E."/>
            <person name="Tilker A."/>
            <person name="Ludewig U."/>
            <person name="Schneiker S."/>
            <person name="Goesmann A."/>
            <person name="Arnold W."/>
            <person name="Bekel T."/>
            <person name="Brinkrolf K."/>
            <person name="Brune I."/>
            <person name="Goetker S."/>
            <person name="Kalinowski J."/>
            <person name="Kamp P.-B."/>
            <person name="Lobo F.P."/>
            <person name="Viehoever P."/>
            <person name="Weisshaar B."/>
            <person name="Soriano F."/>
            <person name="Droege M."/>
            <person name="Puehler A."/>
        </authorList>
    </citation>
    <scope>NUCLEOTIDE SEQUENCE [LARGE SCALE GENOMIC DNA]</scope>
    <source>
        <strain>ATCC 43042 / DSM 7109</strain>
    </source>
</reference>
<sequence>MSEVRVRFCPSPTGTPHVGMVRTALFNWAYARHTGGKLIFRIEDTDAQRDTEESYQAIIDSLKWLGLDWDEGIETGGPHEPYRQSQRMDIYAEVLEKLKAAGEVYPAYSTPEEVEERHKAAGRDPKLGYDNYDRDLTEEQIAAFEAEGRKPVWRLKMDHDRRYTWTDLVRGEMDVDGKTMPDFVVARSNGQPLYTLVNPLDDALMGITHVLRGEDLLPSTPRQIALYEALIRIGVAKEVPTFAHLPFVTGEGNRKLSKRDPESNLFNHRDAGVIPEGMLNYLSLLGWSLSADEDIFTMAQLIENFDIADVKPNPARFDHKKMEAINADHIRMLDLADFTQRLRTYLEEFKGWPADYPADKFAFAAELVQTRIKVLGDADGLLRFLLTKDEDLELEPKAARKNLKEAAKEPLEAAIEELEAIAEEDFRTEPIEQALSTRLIEQMELKPRVAYGALRVAICGQAVSPPLFESMELLGKDSTLVRLRAGLEQTPFQAEQPAN</sequence>
<protein>
    <recommendedName>
        <fullName evidence="1">Glutamate--tRNA ligase</fullName>
        <ecNumber evidence="1">6.1.1.17</ecNumber>
    </recommendedName>
    <alternativeName>
        <fullName evidence="1">Glutamyl-tRNA synthetase</fullName>
        <shortName evidence="1">GluRS</shortName>
    </alternativeName>
</protein>
<accession>B1VG41</accession>
<comment type="function">
    <text evidence="1">Catalyzes the attachment of glutamate to tRNA(Glu) in a two-step reaction: glutamate is first activated by ATP to form Glu-AMP and then transferred to the acceptor end of tRNA(Glu).</text>
</comment>
<comment type="catalytic activity">
    <reaction evidence="1">
        <text>tRNA(Glu) + L-glutamate + ATP = L-glutamyl-tRNA(Glu) + AMP + diphosphate</text>
        <dbReference type="Rhea" id="RHEA:23540"/>
        <dbReference type="Rhea" id="RHEA-COMP:9663"/>
        <dbReference type="Rhea" id="RHEA-COMP:9680"/>
        <dbReference type="ChEBI" id="CHEBI:29985"/>
        <dbReference type="ChEBI" id="CHEBI:30616"/>
        <dbReference type="ChEBI" id="CHEBI:33019"/>
        <dbReference type="ChEBI" id="CHEBI:78442"/>
        <dbReference type="ChEBI" id="CHEBI:78520"/>
        <dbReference type="ChEBI" id="CHEBI:456215"/>
        <dbReference type="EC" id="6.1.1.17"/>
    </reaction>
</comment>
<comment type="subunit">
    <text evidence="1">Monomer.</text>
</comment>
<comment type="subcellular location">
    <subcellularLocation>
        <location evidence="1">Cytoplasm</location>
    </subcellularLocation>
</comment>
<comment type="similarity">
    <text evidence="1">Belongs to the class-I aminoacyl-tRNA synthetase family. Glutamate--tRNA ligase type 1 subfamily.</text>
</comment>
<feature type="chain" id="PRO_0000367654" description="Glutamate--tRNA ligase">
    <location>
        <begin position="1"/>
        <end position="499"/>
    </location>
</feature>
<feature type="short sequence motif" description="'HIGH' region" evidence="1">
    <location>
        <begin position="10"/>
        <end position="20"/>
    </location>
</feature>
<feature type="short sequence motif" description="'KMSKS' region" evidence="1">
    <location>
        <begin position="255"/>
        <end position="259"/>
    </location>
</feature>
<feature type="binding site" evidence="1">
    <location>
        <position position="258"/>
    </location>
    <ligand>
        <name>ATP</name>
        <dbReference type="ChEBI" id="CHEBI:30616"/>
    </ligand>
</feature>
<evidence type="ECO:0000255" key="1">
    <source>
        <dbReference type="HAMAP-Rule" id="MF_00022"/>
    </source>
</evidence>
<dbReference type="EC" id="6.1.1.17" evidence="1"/>
<dbReference type="EMBL" id="AM942444">
    <property type="protein sequence ID" value="CAQ04730.1"/>
    <property type="molecule type" value="Genomic_DNA"/>
</dbReference>
<dbReference type="RefSeq" id="WP_012360019.1">
    <property type="nucleotide sequence ID" value="NC_010545.1"/>
</dbReference>
<dbReference type="SMR" id="B1VG41"/>
<dbReference type="STRING" id="504474.cu0770"/>
<dbReference type="GeneID" id="60603545"/>
<dbReference type="KEGG" id="cur:cu0770"/>
<dbReference type="eggNOG" id="COG0008">
    <property type="taxonomic scope" value="Bacteria"/>
</dbReference>
<dbReference type="HOGENOM" id="CLU_015768_6_1_11"/>
<dbReference type="Proteomes" id="UP000001727">
    <property type="component" value="Chromosome"/>
</dbReference>
<dbReference type="GO" id="GO:0005829">
    <property type="term" value="C:cytosol"/>
    <property type="evidence" value="ECO:0007669"/>
    <property type="project" value="TreeGrafter"/>
</dbReference>
<dbReference type="GO" id="GO:0005524">
    <property type="term" value="F:ATP binding"/>
    <property type="evidence" value="ECO:0007669"/>
    <property type="project" value="UniProtKB-UniRule"/>
</dbReference>
<dbReference type="GO" id="GO:0004818">
    <property type="term" value="F:glutamate-tRNA ligase activity"/>
    <property type="evidence" value="ECO:0007669"/>
    <property type="project" value="UniProtKB-UniRule"/>
</dbReference>
<dbReference type="GO" id="GO:0000049">
    <property type="term" value="F:tRNA binding"/>
    <property type="evidence" value="ECO:0007669"/>
    <property type="project" value="InterPro"/>
</dbReference>
<dbReference type="GO" id="GO:0008270">
    <property type="term" value="F:zinc ion binding"/>
    <property type="evidence" value="ECO:0007669"/>
    <property type="project" value="InterPro"/>
</dbReference>
<dbReference type="GO" id="GO:0006424">
    <property type="term" value="P:glutamyl-tRNA aminoacylation"/>
    <property type="evidence" value="ECO:0007669"/>
    <property type="project" value="UniProtKB-UniRule"/>
</dbReference>
<dbReference type="CDD" id="cd00808">
    <property type="entry name" value="GluRS_core"/>
    <property type="match status" value="1"/>
</dbReference>
<dbReference type="FunFam" id="3.40.50.620:FF:000149">
    <property type="entry name" value="Glutamate--tRNA ligase"/>
    <property type="match status" value="1"/>
</dbReference>
<dbReference type="Gene3D" id="1.10.10.350">
    <property type="match status" value="1"/>
</dbReference>
<dbReference type="Gene3D" id="1.10.8.70">
    <property type="entry name" value="Glutamate-tRNA synthetase, class I, anticodon-binding domain 1"/>
    <property type="match status" value="1"/>
</dbReference>
<dbReference type="Gene3D" id="3.40.50.620">
    <property type="entry name" value="HUPs"/>
    <property type="match status" value="1"/>
</dbReference>
<dbReference type="HAMAP" id="MF_00022">
    <property type="entry name" value="Glu_tRNA_synth_type1"/>
    <property type="match status" value="1"/>
</dbReference>
<dbReference type="InterPro" id="IPR045462">
    <property type="entry name" value="aa-tRNA-synth_I_cd-bd"/>
</dbReference>
<dbReference type="InterPro" id="IPR020751">
    <property type="entry name" value="aa-tRNA-synth_I_codon-bd_sub2"/>
</dbReference>
<dbReference type="InterPro" id="IPR008925">
    <property type="entry name" value="aa_tRNA-synth_I_cd-bd_sf"/>
</dbReference>
<dbReference type="InterPro" id="IPR004527">
    <property type="entry name" value="Glu-tRNA-ligase_bac/mito"/>
</dbReference>
<dbReference type="InterPro" id="IPR020752">
    <property type="entry name" value="Glu-tRNA-synth_I_codon-bd_sub1"/>
</dbReference>
<dbReference type="InterPro" id="IPR000924">
    <property type="entry name" value="Glu/Gln-tRNA-synth"/>
</dbReference>
<dbReference type="InterPro" id="IPR020058">
    <property type="entry name" value="Glu/Gln-tRNA-synth_Ib_cat-dom"/>
</dbReference>
<dbReference type="InterPro" id="IPR049940">
    <property type="entry name" value="GluQ/Sye"/>
</dbReference>
<dbReference type="InterPro" id="IPR033910">
    <property type="entry name" value="GluRS_core"/>
</dbReference>
<dbReference type="InterPro" id="IPR014729">
    <property type="entry name" value="Rossmann-like_a/b/a_fold"/>
</dbReference>
<dbReference type="NCBIfam" id="TIGR00464">
    <property type="entry name" value="gltX_bact"/>
    <property type="match status" value="1"/>
</dbReference>
<dbReference type="PANTHER" id="PTHR43311">
    <property type="entry name" value="GLUTAMATE--TRNA LIGASE"/>
    <property type="match status" value="1"/>
</dbReference>
<dbReference type="PANTHER" id="PTHR43311:SF2">
    <property type="entry name" value="GLUTAMATE--TRNA LIGASE, MITOCHONDRIAL-RELATED"/>
    <property type="match status" value="1"/>
</dbReference>
<dbReference type="Pfam" id="PF19269">
    <property type="entry name" value="Anticodon_2"/>
    <property type="match status" value="1"/>
</dbReference>
<dbReference type="Pfam" id="PF00749">
    <property type="entry name" value="tRNA-synt_1c"/>
    <property type="match status" value="1"/>
</dbReference>
<dbReference type="PRINTS" id="PR00987">
    <property type="entry name" value="TRNASYNTHGLU"/>
</dbReference>
<dbReference type="SUPFAM" id="SSF48163">
    <property type="entry name" value="An anticodon-binding domain of class I aminoacyl-tRNA synthetases"/>
    <property type="match status" value="1"/>
</dbReference>
<dbReference type="SUPFAM" id="SSF52374">
    <property type="entry name" value="Nucleotidylyl transferase"/>
    <property type="match status" value="1"/>
</dbReference>
<gene>
    <name evidence="1" type="primary">gltX</name>
    <name type="ordered locus">cu0770</name>
</gene>